<gene>
    <name evidence="1" type="primary">mdh</name>
    <name type="ordered locus">Helmi_14200</name>
    <name type="ORF">HM1_1472</name>
</gene>
<organism>
    <name type="scientific">Heliobacterium modesticaldum (strain ATCC 51547 / Ice1)</name>
    <dbReference type="NCBI Taxonomy" id="498761"/>
    <lineage>
        <taxon>Bacteria</taxon>
        <taxon>Bacillati</taxon>
        <taxon>Bacillota</taxon>
        <taxon>Clostridia</taxon>
        <taxon>Eubacteriales</taxon>
        <taxon>Heliobacteriaceae</taxon>
        <taxon>Heliomicrobium</taxon>
    </lineage>
</organism>
<accession>B0TCL9</accession>
<proteinExistence type="inferred from homology"/>
<feature type="chain" id="PRO_1000126136" description="Malate dehydrogenase">
    <location>
        <begin position="1"/>
        <end position="309"/>
    </location>
</feature>
<feature type="active site" description="Proton acceptor" evidence="1">
    <location>
        <position position="176"/>
    </location>
</feature>
<feature type="binding site" evidence="1">
    <location>
        <begin position="10"/>
        <end position="15"/>
    </location>
    <ligand>
        <name>NAD(+)</name>
        <dbReference type="ChEBI" id="CHEBI:57540"/>
    </ligand>
</feature>
<feature type="binding site" evidence="1">
    <location>
        <position position="34"/>
    </location>
    <ligand>
        <name>NAD(+)</name>
        <dbReference type="ChEBI" id="CHEBI:57540"/>
    </ligand>
</feature>
<feature type="binding site" evidence="1">
    <location>
        <position position="83"/>
    </location>
    <ligand>
        <name>substrate</name>
    </ligand>
</feature>
<feature type="binding site" evidence="1">
    <location>
        <position position="89"/>
    </location>
    <ligand>
        <name>substrate</name>
    </ligand>
</feature>
<feature type="binding site" evidence="1">
    <location>
        <position position="96"/>
    </location>
    <ligand>
        <name>NAD(+)</name>
        <dbReference type="ChEBI" id="CHEBI:57540"/>
    </ligand>
</feature>
<feature type="binding site" evidence="1">
    <location>
        <begin position="119"/>
        <end position="121"/>
    </location>
    <ligand>
        <name>NAD(+)</name>
        <dbReference type="ChEBI" id="CHEBI:57540"/>
    </ligand>
</feature>
<feature type="binding site" evidence="1">
    <location>
        <position position="121"/>
    </location>
    <ligand>
        <name>substrate</name>
    </ligand>
</feature>
<feature type="binding site" evidence="1">
    <location>
        <position position="152"/>
    </location>
    <ligand>
        <name>substrate</name>
    </ligand>
</feature>
<name>MDH_HELMI</name>
<keyword id="KW-0520">NAD</keyword>
<keyword id="KW-0560">Oxidoreductase</keyword>
<keyword id="KW-1185">Reference proteome</keyword>
<keyword id="KW-0816">Tricarboxylic acid cycle</keyword>
<protein>
    <recommendedName>
        <fullName evidence="1">Malate dehydrogenase</fullName>
        <ecNumber evidence="1">1.1.1.37</ecNumber>
    </recommendedName>
</protein>
<sequence length="309" mass="32840">MARKKISIIGAGNVGATAAHWAASKELGDIVLLDIMEGIPQGKGLDLMEASPVEGFDCHIIGTNSYADTANSDVVVITAGIARKPGMSRDDLITTNTKIVADCAKKAAEQSPDSIIIIVSNPLDAMTYVAQKASGFPTNRVFGMSGILDAARFKTFIAMEMGCSVKDVSTILLGGHGDDMVPLPSYTFIGGIPIRQLLPEEKIQAMVDRARKGGAEIVAYLKTGSAYYAPSASVIQMVEAILKDQKRILPVAAYLNGEYGYEGIYTSVPVMLGANGVEKVFEIELTAEERQLFAKSVDSVKNLIAVTGM</sequence>
<comment type="function">
    <text evidence="1">Catalyzes the reversible oxidation of malate to oxaloacetate.</text>
</comment>
<comment type="catalytic activity">
    <reaction evidence="1">
        <text>(S)-malate + NAD(+) = oxaloacetate + NADH + H(+)</text>
        <dbReference type="Rhea" id="RHEA:21432"/>
        <dbReference type="ChEBI" id="CHEBI:15378"/>
        <dbReference type="ChEBI" id="CHEBI:15589"/>
        <dbReference type="ChEBI" id="CHEBI:16452"/>
        <dbReference type="ChEBI" id="CHEBI:57540"/>
        <dbReference type="ChEBI" id="CHEBI:57945"/>
        <dbReference type="EC" id="1.1.1.37"/>
    </reaction>
</comment>
<comment type="similarity">
    <text evidence="1">Belongs to the LDH/MDH superfamily. MDH type 3 family.</text>
</comment>
<reference key="1">
    <citation type="journal article" date="2008" name="J. Bacteriol.">
        <title>The genome of Heliobacterium modesticaldum, a phototrophic representative of the Firmicutes containing the simplest photosynthetic apparatus.</title>
        <authorList>
            <person name="Sattley W.M."/>
            <person name="Madigan M.T."/>
            <person name="Swingley W.D."/>
            <person name="Cheung P.C."/>
            <person name="Clocksin K.M."/>
            <person name="Conrad A.L."/>
            <person name="Dejesa L.C."/>
            <person name="Honchak B.M."/>
            <person name="Jung D.O."/>
            <person name="Karbach L.E."/>
            <person name="Kurdoglu A."/>
            <person name="Lahiri S."/>
            <person name="Mastrian S.D."/>
            <person name="Page L.E."/>
            <person name="Taylor H.L."/>
            <person name="Wang Z.T."/>
            <person name="Raymond J."/>
            <person name="Chen M."/>
            <person name="Blankenship R.E."/>
            <person name="Touchman J.W."/>
        </authorList>
    </citation>
    <scope>NUCLEOTIDE SEQUENCE [LARGE SCALE GENOMIC DNA]</scope>
    <source>
        <strain>ATCC 51547 / Ice1</strain>
    </source>
</reference>
<evidence type="ECO:0000255" key="1">
    <source>
        <dbReference type="HAMAP-Rule" id="MF_00487"/>
    </source>
</evidence>
<dbReference type="EC" id="1.1.1.37" evidence="1"/>
<dbReference type="EMBL" id="CP000930">
    <property type="protein sequence ID" value="ABZ84045.1"/>
    <property type="molecule type" value="Genomic_DNA"/>
</dbReference>
<dbReference type="RefSeq" id="WP_012282560.1">
    <property type="nucleotide sequence ID" value="NC_010337.2"/>
</dbReference>
<dbReference type="SMR" id="B0TCL9"/>
<dbReference type="STRING" id="498761.HM1_1472"/>
<dbReference type="KEGG" id="hmo:HM1_1472"/>
<dbReference type="eggNOG" id="COG0039">
    <property type="taxonomic scope" value="Bacteria"/>
</dbReference>
<dbReference type="HOGENOM" id="CLU_045401_2_1_9"/>
<dbReference type="OrthoDB" id="9802969at2"/>
<dbReference type="Proteomes" id="UP000008550">
    <property type="component" value="Chromosome"/>
</dbReference>
<dbReference type="GO" id="GO:0004459">
    <property type="term" value="F:L-lactate dehydrogenase activity"/>
    <property type="evidence" value="ECO:0007669"/>
    <property type="project" value="TreeGrafter"/>
</dbReference>
<dbReference type="GO" id="GO:0030060">
    <property type="term" value="F:L-malate dehydrogenase (NAD+) activity"/>
    <property type="evidence" value="ECO:0007669"/>
    <property type="project" value="UniProtKB-UniRule"/>
</dbReference>
<dbReference type="GO" id="GO:0006089">
    <property type="term" value="P:lactate metabolic process"/>
    <property type="evidence" value="ECO:0007669"/>
    <property type="project" value="TreeGrafter"/>
</dbReference>
<dbReference type="GO" id="GO:0006099">
    <property type="term" value="P:tricarboxylic acid cycle"/>
    <property type="evidence" value="ECO:0007669"/>
    <property type="project" value="UniProtKB-UniRule"/>
</dbReference>
<dbReference type="CDD" id="cd01339">
    <property type="entry name" value="LDH-like_MDH"/>
    <property type="match status" value="1"/>
</dbReference>
<dbReference type="FunFam" id="3.40.50.720:FF:000018">
    <property type="entry name" value="Malate dehydrogenase"/>
    <property type="match status" value="1"/>
</dbReference>
<dbReference type="FunFam" id="3.90.110.10:FF:000004">
    <property type="entry name" value="Malate dehydrogenase"/>
    <property type="match status" value="1"/>
</dbReference>
<dbReference type="Gene3D" id="3.90.110.10">
    <property type="entry name" value="Lactate dehydrogenase/glycoside hydrolase, family 4, C-terminal"/>
    <property type="match status" value="1"/>
</dbReference>
<dbReference type="Gene3D" id="3.40.50.720">
    <property type="entry name" value="NAD(P)-binding Rossmann-like Domain"/>
    <property type="match status" value="1"/>
</dbReference>
<dbReference type="HAMAP" id="MF_00487">
    <property type="entry name" value="Malate_dehydrog_3"/>
    <property type="match status" value="1"/>
</dbReference>
<dbReference type="InterPro" id="IPR001557">
    <property type="entry name" value="L-lactate/malate_DH"/>
</dbReference>
<dbReference type="InterPro" id="IPR022383">
    <property type="entry name" value="Lactate/malate_DH_C"/>
</dbReference>
<dbReference type="InterPro" id="IPR001236">
    <property type="entry name" value="Lactate/malate_DH_N"/>
</dbReference>
<dbReference type="InterPro" id="IPR015955">
    <property type="entry name" value="Lactate_DH/Glyco_Ohase_4_C"/>
</dbReference>
<dbReference type="InterPro" id="IPR011275">
    <property type="entry name" value="Malate_DH_type3"/>
</dbReference>
<dbReference type="InterPro" id="IPR036291">
    <property type="entry name" value="NAD(P)-bd_dom_sf"/>
</dbReference>
<dbReference type="NCBIfam" id="TIGR01763">
    <property type="entry name" value="MalateDH_bact"/>
    <property type="match status" value="1"/>
</dbReference>
<dbReference type="NCBIfam" id="NF004863">
    <property type="entry name" value="PRK06223.1"/>
    <property type="match status" value="1"/>
</dbReference>
<dbReference type="PANTHER" id="PTHR43128">
    <property type="entry name" value="L-2-HYDROXYCARBOXYLATE DEHYDROGENASE (NAD(P)(+))"/>
    <property type="match status" value="1"/>
</dbReference>
<dbReference type="PANTHER" id="PTHR43128:SF16">
    <property type="entry name" value="L-LACTATE DEHYDROGENASE"/>
    <property type="match status" value="1"/>
</dbReference>
<dbReference type="Pfam" id="PF02866">
    <property type="entry name" value="Ldh_1_C"/>
    <property type="match status" value="1"/>
</dbReference>
<dbReference type="Pfam" id="PF00056">
    <property type="entry name" value="Ldh_1_N"/>
    <property type="match status" value="1"/>
</dbReference>
<dbReference type="PIRSF" id="PIRSF000102">
    <property type="entry name" value="Lac_mal_DH"/>
    <property type="match status" value="1"/>
</dbReference>
<dbReference type="PRINTS" id="PR00086">
    <property type="entry name" value="LLDHDRGNASE"/>
</dbReference>
<dbReference type="SUPFAM" id="SSF56327">
    <property type="entry name" value="LDH C-terminal domain-like"/>
    <property type="match status" value="1"/>
</dbReference>
<dbReference type="SUPFAM" id="SSF51735">
    <property type="entry name" value="NAD(P)-binding Rossmann-fold domains"/>
    <property type="match status" value="1"/>
</dbReference>